<dbReference type="EC" id="6.3.4.5" evidence="1"/>
<dbReference type="EMBL" id="CP001340">
    <property type="protein sequence ID" value="ACL93595.1"/>
    <property type="molecule type" value="Genomic_DNA"/>
</dbReference>
<dbReference type="RefSeq" id="WP_010918018.1">
    <property type="nucleotide sequence ID" value="NC_011916.1"/>
</dbReference>
<dbReference type="RefSeq" id="YP_002515503.1">
    <property type="nucleotide sequence ID" value="NC_011916.1"/>
</dbReference>
<dbReference type="SMR" id="B8GXL9"/>
<dbReference type="GeneID" id="7332382"/>
<dbReference type="KEGG" id="ccs:CCNA_00128"/>
<dbReference type="PATRIC" id="fig|565050.3.peg.127"/>
<dbReference type="HOGENOM" id="CLU_032784_4_2_5"/>
<dbReference type="OrthoDB" id="9801641at2"/>
<dbReference type="PhylomeDB" id="B8GXL9"/>
<dbReference type="UniPathway" id="UPA00068">
    <property type="reaction ID" value="UER00113"/>
</dbReference>
<dbReference type="Proteomes" id="UP000001364">
    <property type="component" value="Chromosome"/>
</dbReference>
<dbReference type="GO" id="GO:0005737">
    <property type="term" value="C:cytoplasm"/>
    <property type="evidence" value="ECO:0007669"/>
    <property type="project" value="UniProtKB-SubCell"/>
</dbReference>
<dbReference type="GO" id="GO:0004055">
    <property type="term" value="F:argininosuccinate synthase activity"/>
    <property type="evidence" value="ECO:0007669"/>
    <property type="project" value="UniProtKB-UniRule"/>
</dbReference>
<dbReference type="GO" id="GO:0005524">
    <property type="term" value="F:ATP binding"/>
    <property type="evidence" value="ECO:0007669"/>
    <property type="project" value="UniProtKB-UniRule"/>
</dbReference>
<dbReference type="GO" id="GO:0000053">
    <property type="term" value="P:argininosuccinate metabolic process"/>
    <property type="evidence" value="ECO:0007669"/>
    <property type="project" value="TreeGrafter"/>
</dbReference>
<dbReference type="GO" id="GO:0006526">
    <property type="term" value="P:L-arginine biosynthetic process"/>
    <property type="evidence" value="ECO:0007669"/>
    <property type="project" value="UniProtKB-UniRule"/>
</dbReference>
<dbReference type="GO" id="GO:0000050">
    <property type="term" value="P:urea cycle"/>
    <property type="evidence" value="ECO:0007669"/>
    <property type="project" value="TreeGrafter"/>
</dbReference>
<dbReference type="CDD" id="cd01999">
    <property type="entry name" value="ASS"/>
    <property type="match status" value="1"/>
</dbReference>
<dbReference type="FunFam" id="3.40.50.620:FF:000019">
    <property type="entry name" value="Argininosuccinate synthase"/>
    <property type="match status" value="1"/>
</dbReference>
<dbReference type="FunFam" id="3.90.1260.10:FF:000007">
    <property type="entry name" value="Argininosuccinate synthase"/>
    <property type="match status" value="1"/>
</dbReference>
<dbReference type="Gene3D" id="3.90.1260.10">
    <property type="entry name" value="Argininosuccinate synthetase, chain A, domain 2"/>
    <property type="match status" value="1"/>
</dbReference>
<dbReference type="Gene3D" id="3.40.50.620">
    <property type="entry name" value="HUPs"/>
    <property type="match status" value="1"/>
</dbReference>
<dbReference type="Gene3D" id="1.20.5.470">
    <property type="entry name" value="Single helix bin"/>
    <property type="match status" value="1"/>
</dbReference>
<dbReference type="HAMAP" id="MF_00005">
    <property type="entry name" value="Arg_succ_synth_type1"/>
    <property type="match status" value="1"/>
</dbReference>
<dbReference type="InterPro" id="IPR048268">
    <property type="entry name" value="Arginosuc_syn_C"/>
</dbReference>
<dbReference type="InterPro" id="IPR048267">
    <property type="entry name" value="Arginosuc_syn_N"/>
</dbReference>
<dbReference type="InterPro" id="IPR001518">
    <property type="entry name" value="Arginosuc_synth"/>
</dbReference>
<dbReference type="InterPro" id="IPR018223">
    <property type="entry name" value="Arginosuc_synth_CS"/>
</dbReference>
<dbReference type="InterPro" id="IPR023434">
    <property type="entry name" value="Arginosuc_synth_type_1_subfam"/>
</dbReference>
<dbReference type="InterPro" id="IPR024074">
    <property type="entry name" value="AS_cat/multimer_dom_body"/>
</dbReference>
<dbReference type="InterPro" id="IPR014729">
    <property type="entry name" value="Rossmann-like_a/b/a_fold"/>
</dbReference>
<dbReference type="NCBIfam" id="TIGR00032">
    <property type="entry name" value="argG"/>
    <property type="match status" value="1"/>
</dbReference>
<dbReference type="NCBIfam" id="NF001770">
    <property type="entry name" value="PRK00509.1"/>
    <property type="match status" value="1"/>
</dbReference>
<dbReference type="PANTHER" id="PTHR11587">
    <property type="entry name" value="ARGININOSUCCINATE SYNTHASE"/>
    <property type="match status" value="1"/>
</dbReference>
<dbReference type="PANTHER" id="PTHR11587:SF2">
    <property type="entry name" value="ARGININOSUCCINATE SYNTHASE"/>
    <property type="match status" value="1"/>
</dbReference>
<dbReference type="Pfam" id="PF20979">
    <property type="entry name" value="Arginosuc_syn_C"/>
    <property type="match status" value="1"/>
</dbReference>
<dbReference type="Pfam" id="PF00764">
    <property type="entry name" value="Arginosuc_synth"/>
    <property type="match status" value="1"/>
</dbReference>
<dbReference type="SUPFAM" id="SSF52402">
    <property type="entry name" value="Adenine nucleotide alpha hydrolases-like"/>
    <property type="match status" value="1"/>
</dbReference>
<dbReference type="SUPFAM" id="SSF69864">
    <property type="entry name" value="Argininosuccinate synthetase, C-terminal domain"/>
    <property type="match status" value="1"/>
</dbReference>
<dbReference type="PROSITE" id="PS00564">
    <property type="entry name" value="ARGININOSUCCIN_SYN_1"/>
    <property type="match status" value="1"/>
</dbReference>
<dbReference type="PROSITE" id="PS00565">
    <property type="entry name" value="ARGININOSUCCIN_SYN_2"/>
    <property type="match status" value="1"/>
</dbReference>
<organism>
    <name type="scientific">Caulobacter vibrioides (strain NA1000 / CB15N)</name>
    <name type="common">Caulobacter crescentus</name>
    <dbReference type="NCBI Taxonomy" id="565050"/>
    <lineage>
        <taxon>Bacteria</taxon>
        <taxon>Pseudomonadati</taxon>
        <taxon>Pseudomonadota</taxon>
        <taxon>Alphaproteobacteria</taxon>
        <taxon>Caulobacterales</taxon>
        <taxon>Caulobacteraceae</taxon>
        <taxon>Caulobacter</taxon>
    </lineage>
</organism>
<evidence type="ECO:0000255" key="1">
    <source>
        <dbReference type="HAMAP-Rule" id="MF_00005"/>
    </source>
</evidence>
<gene>
    <name evidence="1" type="primary">argG</name>
    <name type="ordered locus">CCNA_00128</name>
</gene>
<comment type="catalytic activity">
    <reaction evidence="1">
        <text>L-citrulline + L-aspartate + ATP = 2-(N(omega)-L-arginino)succinate + AMP + diphosphate + H(+)</text>
        <dbReference type="Rhea" id="RHEA:10932"/>
        <dbReference type="ChEBI" id="CHEBI:15378"/>
        <dbReference type="ChEBI" id="CHEBI:29991"/>
        <dbReference type="ChEBI" id="CHEBI:30616"/>
        <dbReference type="ChEBI" id="CHEBI:33019"/>
        <dbReference type="ChEBI" id="CHEBI:57472"/>
        <dbReference type="ChEBI" id="CHEBI:57743"/>
        <dbReference type="ChEBI" id="CHEBI:456215"/>
        <dbReference type="EC" id="6.3.4.5"/>
    </reaction>
</comment>
<comment type="pathway">
    <text evidence="1">Amino-acid biosynthesis; L-arginine biosynthesis; L-arginine from L-ornithine and carbamoyl phosphate: step 2/3.</text>
</comment>
<comment type="subunit">
    <text evidence="1">Homotetramer.</text>
</comment>
<comment type="subcellular location">
    <subcellularLocation>
        <location evidence="1">Cytoplasm</location>
    </subcellularLocation>
</comment>
<comment type="similarity">
    <text evidence="1">Belongs to the argininosuccinate synthase family. Type 1 subfamily.</text>
</comment>
<feature type="chain" id="PRO_1000191888" description="Argininosuccinate synthase">
    <location>
        <begin position="1"/>
        <end position="408"/>
    </location>
</feature>
<feature type="binding site" evidence="1">
    <location>
        <begin position="12"/>
        <end position="20"/>
    </location>
    <ligand>
        <name>ATP</name>
        <dbReference type="ChEBI" id="CHEBI:30616"/>
    </ligand>
</feature>
<feature type="binding site" evidence="1">
    <location>
        <position position="39"/>
    </location>
    <ligand>
        <name>ATP</name>
        <dbReference type="ChEBI" id="CHEBI:30616"/>
    </ligand>
</feature>
<feature type="binding site" evidence="1">
    <location>
        <position position="92"/>
    </location>
    <ligand>
        <name>L-citrulline</name>
        <dbReference type="ChEBI" id="CHEBI:57743"/>
    </ligand>
</feature>
<feature type="binding site" evidence="1">
    <location>
        <position position="97"/>
    </location>
    <ligand>
        <name>L-citrulline</name>
        <dbReference type="ChEBI" id="CHEBI:57743"/>
    </ligand>
</feature>
<feature type="binding site" evidence="1">
    <location>
        <position position="122"/>
    </location>
    <ligand>
        <name>ATP</name>
        <dbReference type="ChEBI" id="CHEBI:30616"/>
    </ligand>
</feature>
<feature type="binding site" evidence="1">
    <location>
        <position position="124"/>
    </location>
    <ligand>
        <name>L-aspartate</name>
        <dbReference type="ChEBI" id="CHEBI:29991"/>
    </ligand>
</feature>
<feature type="binding site" evidence="1">
    <location>
        <position position="128"/>
    </location>
    <ligand>
        <name>L-aspartate</name>
        <dbReference type="ChEBI" id="CHEBI:29991"/>
    </ligand>
</feature>
<feature type="binding site" evidence="1">
    <location>
        <position position="128"/>
    </location>
    <ligand>
        <name>L-citrulline</name>
        <dbReference type="ChEBI" id="CHEBI:57743"/>
    </ligand>
</feature>
<feature type="binding site" evidence="1">
    <location>
        <position position="129"/>
    </location>
    <ligand>
        <name>L-aspartate</name>
        <dbReference type="ChEBI" id="CHEBI:29991"/>
    </ligand>
</feature>
<feature type="binding site" evidence="1">
    <location>
        <position position="132"/>
    </location>
    <ligand>
        <name>L-citrulline</name>
        <dbReference type="ChEBI" id="CHEBI:57743"/>
    </ligand>
</feature>
<feature type="binding site" evidence="1">
    <location>
        <position position="183"/>
    </location>
    <ligand>
        <name>L-citrulline</name>
        <dbReference type="ChEBI" id="CHEBI:57743"/>
    </ligand>
</feature>
<feature type="binding site" evidence="1">
    <location>
        <position position="192"/>
    </location>
    <ligand>
        <name>L-citrulline</name>
        <dbReference type="ChEBI" id="CHEBI:57743"/>
    </ligand>
</feature>
<feature type="binding site" evidence="1">
    <location>
        <position position="268"/>
    </location>
    <ligand>
        <name>L-citrulline</name>
        <dbReference type="ChEBI" id="CHEBI:57743"/>
    </ligand>
</feature>
<feature type="binding site" evidence="1">
    <location>
        <position position="280"/>
    </location>
    <ligand>
        <name>L-citrulline</name>
        <dbReference type="ChEBI" id="CHEBI:57743"/>
    </ligand>
</feature>
<name>ASSY_CAUVN</name>
<protein>
    <recommendedName>
        <fullName evidence="1">Argininosuccinate synthase</fullName>
        <ecNumber evidence="1">6.3.4.5</ecNumber>
    </recommendedName>
    <alternativeName>
        <fullName evidence="1">Citrulline--aspartate ligase</fullName>
    </alternativeName>
</protein>
<accession>B8GXL9</accession>
<sequence length="408" mass="45331">MADKSVKKVVLAYSGGLDTSIILKWLQTEYGAEVITFTADLGQGEEIEPARAKALAAGVKPENIFIEDVREEFVRDYVFPMFRANTVYEGQYLLGTSIARPLIAKKQIEIARKMGADAVSHGATGKGNDQVRFELGYYGLEPDITVIAPWREWDFKSREALLDFAEKHQIQITKDKRGEAPFSVDANLLHSSSEGKVLEDPAVEAPEFVHMRTIAPEDAPDAPTIITIDFEKGDPVAIDGVAMSPATLLTKLNELGRDNGVGRLDLVENRFVGMKSRGVYETPGGTILLAAHRGIESITLDRGAMHLKDELMPKYASLVYNGFWFSPEREMLQAAIDYSQDKVTGRVRVKLYKGNVTVIGRESPYSLYDQDLVTFEEGKVAYDHRDAGGFIKLNALRLRVLAKRDKRG</sequence>
<reference key="1">
    <citation type="journal article" date="2010" name="J. Bacteriol.">
        <title>The genetic basis of laboratory adaptation in Caulobacter crescentus.</title>
        <authorList>
            <person name="Marks M.E."/>
            <person name="Castro-Rojas C.M."/>
            <person name="Teiling C."/>
            <person name="Du L."/>
            <person name="Kapatral V."/>
            <person name="Walunas T.L."/>
            <person name="Crosson S."/>
        </authorList>
    </citation>
    <scope>NUCLEOTIDE SEQUENCE [LARGE SCALE GENOMIC DNA]</scope>
    <source>
        <strain>NA1000 / CB15N</strain>
    </source>
</reference>
<keyword id="KW-0028">Amino-acid biosynthesis</keyword>
<keyword id="KW-0055">Arginine biosynthesis</keyword>
<keyword id="KW-0067">ATP-binding</keyword>
<keyword id="KW-0963">Cytoplasm</keyword>
<keyword id="KW-0436">Ligase</keyword>
<keyword id="KW-0547">Nucleotide-binding</keyword>
<keyword id="KW-1185">Reference proteome</keyword>
<proteinExistence type="inferred from homology"/>